<protein>
    <recommendedName>
        <fullName evidence="1">3-phosphoshikimate 1-carboxyvinyltransferase</fullName>
        <ecNumber evidence="1">2.5.1.19</ecNumber>
    </recommendedName>
    <alternativeName>
        <fullName evidence="1">5-enolpyruvylshikimate-3-phosphate synthase</fullName>
        <shortName evidence="1">EPSP synthase</shortName>
        <shortName evidence="1">EPSPS</shortName>
    </alternativeName>
</protein>
<gene>
    <name evidence="1" type="primary">aroA</name>
    <name type="ordered locus">Suden_0871</name>
</gene>
<evidence type="ECO:0000255" key="1">
    <source>
        <dbReference type="HAMAP-Rule" id="MF_00210"/>
    </source>
</evidence>
<dbReference type="EC" id="2.5.1.19" evidence="1"/>
<dbReference type="EMBL" id="CP000153">
    <property type="protein sequence ID" value="ABB44149.1"/>
    <property type="molecule type" value="Genomic_DNA"/>
</dbReference>
<dbReference type="RefSeq" id="WP_011372501.1">
    <property type="nucleotide sequence ID" value="NC_007575.1"/>
</dbReference>
<dbReference type="SMR" id="Q30S82"/>
<dbReference type="STRING" id="326298.Suden_0871"/>
<dbReference type="KEGG" id="tdn:Suden_0871"/>
<dbReference type="eggNOG" id="COG0128">
    <property type="taxonomic scope" value="Bacteria"/>
</dbReference>
<dbReference type="HOGENOM" id="CLU_024321_0_1_7"/>
<dbReference type="OrthoDB" id="9809920at2"/>
<dbReference type="UniPathway" id="UPA00053">
    <property type="reaction ID" value="UER00089"/>
</dbReference>
<dbReference type="Proteomes" id="UP000002714">
    <property type="component" value="Chromosome"/>
</dbReference>
<dbReference type="GO" id="GO:0005737">
    <property type="term" value="C:cytoplasm"/>
    <property type="evidence" value="ECO:0007669"/>
    <property type="project" value="UniProtKB-SubCell"/>
</dbReference>
<dbReference type="GO" id="GO:0003866">
    <property type="term" value="F:3-phosphoshikimate 1-carboxyvinyltransferase activity"/>
    <property type="evidence" value="ECO:0007669"/>
    <property type="project" value="UniProtKB-UniRule"/>
</dbReference>
<dbReference type="GO" id="GO:0008652">
    <property type="term" value="P:amino acid biosynthetic process"/>
    <property type="evidence" value="ECO:0007669"/>
    <property type="project" value="UniProtKB-KW"/>
</dbReference>
<dbReference type="GO" id="GO:0009073">
    <property type="term" value="P:aromatic amino acid family biosynthetic process"/>
    <property type="evidence" value="ECO:0007669"/>
    <property type="project" value="UniProtKB-KW"/>
</dbReference>
<dbReference type="GO" id="GO:0009423">
    <property type="term" value="P:chorismate biosynthetic process"/>
    <property type="evidence" value="ECO:0007669"/>
    <property type="project" value="UniProtKB-UniRule"/>
</dbReference>
<dbReference type="CDD" id="cd01556">
    <property type="entry name" value="EPSP_synthase"/>
    <property type="match status" value="1"/>
</dbReference>
<dbReference type="FunFam" id="3.65.10.10:FF:000005">
    <property type="entry name" value="3-phosphoshikimate 1-carboxyvinyltransferase"/>
    <property type="match status" value="1"/>
</dbReference>
<dbReference type="Gene3D" id="3.65.10.10">
    <property type="entry name" value="Enolpyruvate transferase domain"/>
    <property type="match status" value="2"/>
</dbReference>
<dbReference type="HAMAP" id="MF_00210">
    <property type="entry name" value="EPSP_synth"/>
    <property type="match status" value="1"/>
</dbReference>
<dbReference type="InterPro" id="IPR001986">
    <property type="entry name" value="Enolpyruvate_Tfrase_dom"/>
</dbReference>
<dbReference type="InterPro" id="IPR036968">
    <property type="entry name" value="Enolpyruvate_Tfrase_sf"/>
</dbReference>
<dbReference type="InterPro" id="IPR006264">
    <property type="entry name" value="EPSP_synthase"/>
</dbReference>
<dbReference type="InterPro" id="IPR023193">
    <property type="entry name" value="EPSP_synthase_CS"/>
</dbReference>
<dbReference type="InterPro" id="IPR013792">
    <property type="entry name" value="RNA3'P_cycl/enolpyr_Trfase_a/b"/>
</dbReference>
<dbReference type="NCBIfam" id="TIGR01356">
    <property type="entry name" value="aroA"/>
    <property type="match status" value="1"/>
</dbReference>
<dbReference type="PANTHER" id="PTHR21090">
    <property type="entry name" value="AROM/DEHYDROQUINATE SYNTHASE"/>
    <property type="match status" value="1"/>
</dbReference>
<dbReference type="PANTHER" id="PTHR21090:SF5">
    <property type="entry name" value="PENTAFUNCTIONAL AROM POLYPEPTIDE"/>
    <property type="match status" value="1"/>
</dbReference>
<dbReference type="Pfam" id="PF00275">
    <property type="entry name" value="EPSP_synthase"/>
    <property type="match status" value="1"/>
</dbReference>
<dbReference type="PIRSF" id="PIRSF000505">
    <property type="entry name" value="EPSPS"/>
    <property type="match status" value="1"/>
</dbReference>
<dbReference type="SUPFAM" id="SSF55205">
    <property type="entry name" value="EPT/RTPC-like"/>
    <property type="match status" value="1"/>
</dbReference>
<dbReference type="PROSITE" id="PS00104">
    <property type="entry name" value="EPSP_SYNTHASE_1"/>
    <property type="match status" value="1"/>
</dbReference>
<dbReference type="PROSITE" id="PS00885">
    <property type="entry name" value="EPSP_SYNTHASE_2"/>
    <property type="match status" value="1"/>
</dbReference>
<comment type="function">
    <text evidence="1">Catalyzes the transfer of the enolpyruvyl moiety of phosphoenolpyruvate (PEP) to the 5-hydroxyl of shikimate-3-phosphate (S3P) to produce enolpyruvyl shikimate-3-phosphate and inorganic phosphate.</text>
</comment>
<comment type="catalytic activity">
    <reaction evidence="1">
        <text>3-phosphoshikimate + phosphoenolpyruvate = 5-O-(1-carboxyvinyl)-3-phosphoshikimate + phosphate</text>
        <dbReference type="Rhea" id="RHEA:21256"/>
        <dbReference type="ChEBI" id="CHEBI:43474"/>
        <dbReference type="ChEBI" id="CHEBI:57701"/>
        <dbReference type="ChEBI" id="CHEBI:58702"/>
        <dbReference type="ChEBI" id="CHEBI:145989"/>
        <dbReference type="EC" id="2.5.1.19"/>
    </reaction>
    <physiologicalReaction direction="left-to-right" evidence="1">
        <dbReference type="Rhea" id="RHEA:21257"/>
    </physiologicalReaction>
</comment>
<comment type="pathway">
    <text evidence="1">Metabolic intermediate biosynthesis; chorismate biosynthesis; chorismate from D-erythrose 4-phosphate and phosphoenolpyruvate: step 6/7.</text>
</comment>
<comment type="subunit">
    <text evidence="1">Monomer.</text>
</comment>
<comment type="subcellular location">
    <subcellularLocation>
        <location evidence="1">Cytoplasm</location>
    </subcellularLocation>
</comment>
<comment type="similarity">
    <text evidence="1">Belongs to the EPSP synthase family.</text>
</comment>
<organism>
    <name type="scientific">Sulfurimonas denitrificans (strain ATCC 33889 / DSM 1251)</name>
    <name type="common">Thiomicrospira denitrificans (strain ATCC 33889 / DSM 1251)</name>
    <dbReference type="NCBI Taxonomy" id="326298"/>
    <lineage>
        <taxon>Bacteria</taxon>
        <taxon>Pseudomonadati</taxon>
        <taxon>Campylobacterota</taxon>
        <taxon>Epsilonproteobacteria</taxon>
        <taxon>Campylobacterales</taxon>
        <taxon>Sulfurimonadaceae</taxon>
        <taxon>Sulfurimonas</taxon>
    </lineage>
</organism>
<proteinExistence type="inferred from homology"/>
<accession>Q30S82</accession>
<keyword id="KW-0028">Amino-acid biosynthesis</keyword>
<keyword id="KW-0057">Aromatic amino acid biosynthesis</keyword>
<keyword id="KW-0963">Cytoplasm</keyword>
<keyword id="KW-1185">Reference proteome</keyword>
<keyword id="KW-0808">Transferase</keyword>
<name>AROA_SULDN</name>
<feature type="chain" id="PRO_1000071740" description="3-phosphoshikimate 1-carboxyvinyltransferase">
    <location>
        <begin position="1"/>
        <end position="428"/>
    </location>
</feature>
<feature type="active site" description="Proton acceptor" evidence="1">
    <location>
        <position position="312"/>
    </location>
</feature>
<feature type="binding site" evidence="1">
    <location>
        <position position="23"/>
    </location>
    <ligand>
        <name>3-phosphoshikimate</name>
        <dbReference type="ChEBI" id="CHEBI:145989"/>
    </ligand>
</feature>
<feature type="binding site" evidence="1">
    <location>
        <position position="23"/>
    </location>
    <ligand>
        <name>phosphoenolpyruvate</name>
        <dbReference type="ChEBI" id="CHEBI:58702"/>
    </ligand>
</feature>
<feature type="binding site" evidence="1">
    <location>
        <position position="24"/>
    </location>
    <ligand>
        <name>3-phosphoshikimate</name>
        <dbReference type="ChEBI" id="CHEBI:145989"/>
    </ligand>
</feature>
<feature type="binding site" evidence="1">
    <location>
        <position position="28"/>
    </location>
    <ligand>
        <name>3-phosphoshikimate</name>
        <dbReference type="ChEBI" id="CHEBI:145989"/>
    </ligand>
</feature>
<feature type="binding site" evidence="1">
    <location>
        <position position="92"/>
    </location>
    <ligand>
        <name>phosphoenolpyruvate</name>
        <dbReference type="ChEBI" id="CHEBI:58702"/>
    </ligand>
</feature>
<feature type="binding site" evidence="1">
    <location>
        <position position="120"/>
    </location>
    <ligand>
        <name>phosphoenolpyruvate</name>
        <dbReference type="ChEBI" id="CHEBI:58702"/>
    </ligand>
</feature>
<feature type="binding site" evidence="1">
    <location>
        <position position="165"/>
    </location>
    <ligand>
        <name>3-phosphoshikimate</name>
        <dbReference type="ChEBI" id="CHEBI:145989"/>
    </ligand>
</feature>
<feature type="binding site" evidence="1">
    <location>
        <position position="167"/>
    </location>
    <ligand>
        <name>3-phosphoshikimate</name>
        <dbReference type="ChEBI" id="CHEBI:145989"/>
    </ligand>
</feature>
<feature type="binding site" evidence="1">
    <location>
        <position position="167"/>
    </location>
    <ligand>
        <name>phosphoenolpyruvate</name>
        <dbReference type="ChEBI" id="CHEBI:58702"/>
    </ligand>
</feature>
<feature type="binding site" evidence="1">
    <location>
        <position position="312"/>
    </location>
    <ligand>
        <name>3-phosphoshikimate</name>
        <dbReference type="ChEBI" id="CHEBI:145989"/>
    </ligand>
</feature>
<feature type="binding site" evidence="1">
    <location>
        <position position="339"/>
    </location>
    <ligand>
        <name>3-phosphoshikimate</name>
        <dbReference type="ChEBI" id="CHEBI:145989"/>
    </ligand>
</feature>
<feature type="binding site" evidence="1">
    <location>
        <position position="343"/>
    </location>
    <ligand>
        <name>phosphoenolpyruvate</name>
        <dbReference type="ChEBI" id="CHEBI:58702"/>
    </ligand>
</feature>
<feature type="binding site" evidence="1">
    <location>
        <position position="384"/>
    </location>
    <ligand>
        <name>phosphoenolpyruvate</name>
        <dbReference type="ChEBI" id="CHEBI:58702"/>
    </ligand>
</feature>
<sequence>MSSVKVYKALAFSLRTSEIASDKSISHRCAMFAMLADGTSQITNFLRAEDTMNSLKIVKNLGATIDDDGETIKISSDGIKESSEVLDCGNSGTGMRLFCGLLSSADGHFVLSGDEYLRRRPMKRITAPLRDIGAKLDGRENGDLAPLSIRGASLKAFNYESKIASAQVKSAMILAALRADGECSFSEPELSRDHTERMLKGMGAEIEVEGLITKIKPMKKLLSPLKIRVPADPSSAFFFAVAAAITPNSNVVLEGVTLNPTRIEAFKALERMGADIRYEATENIYEPIGNIHVKYAPLKAITVEDNISWLIDELPALSIAFACADGVSIVKNAQELRVKESDRISTVVNGLKACGIEVDEVHDGYSVKGGVLKEAKIDSHGDHRIAMSFIIAGVTCGMRVDDIACINTSFPNFFELLKKITKVEFTSL</sequence>
<reference key="1">
    <citation type="journal article" date="2008" name="Appl. Environ. Microbiol.">
        <title>Genome of the epsilonproteobacterial chemolithoautotroph Sulfurimonas denitrificans.</title>
        <authorList>
            <person name="Sievert S.M."/>
            <person name="Scott K.M."/>
            <person name="Klotz M.G."/>
            <person name="Chain P.S.G."/>
            <person name="Hauser L.J."/>
            <person name="Hemp J."/>
            <person name="Huegler M."/>
            <person name="Land M."/>
            <person name="Lapidus A."/>
            <person name="Larimer F.W."/>
            <person name="Lucas S."/>
            <person name="Malfatti S.A."/>
            <person name="Meyer F."/>
            <person name="Paulsen I.T."/>
            <person name="Ren Q."/>
            <person name="Simon J."/>
            <person name="Bailey K."/>
            <person name="Diaz E."/>
            <person name="Fitzpatrick K.A."/>
            <person name="Glover B."/>
            <person name="Gwatney N."/>
            <person name="Korajkic A."/>
            <person name="Long A."/>
            <person name="Mobberley J.M."/>
            <person name="Pantry S.N."/>
            <person name="Pazder G."/>
            <person name="Peterson S."/>
            <person name="Quintanilla J.D."/>
            <person name="Sprinkle R."/>
            <person name="Stephens J."/>
            <person name="Thomas P."/>
            <person name="Vaughn R."/>
            <person name="Weber M.J."/>
            <person name="Wooten L.L."/>
        </authorList>
    </citation>
    <scope>NUCLEOTIDE SEQUENCE [LARGE SCALE GENOMIC DNA]</scope>
    <source>
        <strain>ATCC 33889 / DSM 1251</strain>
    </source>
</reference>